<protein>
    <recommendedName>
        <fullName>Pantothenate synthetase</fullName>
        <shortName>PS</shortName>
        <ecNumber>6.3.2.1</ecNumber>
    </recommendedName>
    <alternativeName>
        <fullName>Pantoate--beta-alanine ligase</fullName>
    </alternativeName>
    <alternativeName>
        <fullName>Pantoate-activating enzyme</fullName>
    </alternativeName>
</protein>
<name>PANC_ECOLI</name>
<dbReference type="EC" id="6.3.2.1"/>
<dbReference type="EMBL" id="L17086">
    <property type="protein sequence ID" value="AAA24272.1"/>
    <property type="molecule type" value="Genomic_DNA"/>
</dbReference>
<dbReference type="EMBL" id="U00096">
    <property type="protein sequence ID" value="AAC73244.1"/>
    <property type="molecule type" value="Genomic_DNA"/>
</dbReference>
<dbReference type="EMBL" id="AP009048">
    <property type="protein sequence ID" value="BAE76042.1"/>
    <property type="molecule type" value="Genomic_DNA"/>
</dbReference>
<dbReference type="PIR" id="E64736">
    <property type="entry name" value="E64736"/>
</dbReference>
<dbReference type="RefSeq" id="NP_414675.1">
    <property type="nucleotide sequence ID" value="NC_000913.3"/>
</dbReference>
<dbReference type="RefSeq" id="WP_000905383.1">
    <property type="nucleotide sequence ID" value="NZ_LN832404.1"/>
</dbReference>
<dbReference type="PDB" id="1IHO">
    <property type="method" value="X-ray"/>
    <property type="resolution" value="1.70 A"/>
    <property type="chains" value="A/B=1-283"/>
</dbReference>
<dbReference type="PDB" id="3GUZ">
    <property type="method" value="X-ray"/>
    <property type="resolution" value="1.67 A"/>
    <property type="chains" value="A/B=1-176"/>
</dbReference>
<dbReference type="PDBsum" id="1IHO"/>
<dbReference type="PDBsum" id="3GUZ"/>
<dbReference type="SMR" id="P31663"/>
<dbReference type="BioGRID" id="4261166">
    <property type="interactions" value="164"/>
</dbReference>
<dbReference type="BioGRID" id="849355">
    <property type="interactions" value="1"/>
</dbReference>
<dbReference type="DIP" id="DIP-10437N"/>
<dbReference type="FunCoup" id="P31663">
    <property type="interactions" value="801"/>
</dbReference>
<dbReference type="IntAct" id="P31663">
    <property type="interactions" value="11"/>
</dbReference>
<dbReference type="MINT" id="P31663"/>
<dbReference type="STRING" id="511145.b0133"/>
<dbReference type="jPOST" id="P31663"/>
<dbReference type="PaxDb" id="511145-b0133"/>
<dbReference type="EnsemblBacteria" id="AAC73244">
    <property type="protein sequence ID" value="AAC73244"/>
    <property type="gene ID" value="b0133"/>
</dbReference>
<dbReference type="GeneID" id="75202052"/>
<dbReference type="GeneID" id="944958"/>
<dbReference type="KEGG" id="ecj:JW0129"/>
<dbReference type="KEGG" id="eco:b0133"/>
<dbReference type="KEGG" id="ecoc:C3026_00570"/>
<dbReference type="PATRIC" id="fig|1411691.4.peg.2148"/>
<dbReference type="EchoBASE" id="EB1696"/>
<dbReference type="eggNOG" id="COG0414">
    <property type="taxonomic scope" value="Bacteria"/>
</dbReference>
<dbReference type="HOGENOM" id="CLU_047148_0_0_6"/>
<dbReference type="InParanoid" id="P31663"/>
<dbReference type="OMA" id="CNHKLEP"/>
<dbReference type="OrthoDB" id="9773087at2"/>
<dbReference type="PhylomeDB" id="P31663"/>
<dbReference type="BioCyc" id="EcoCyc:PANTOATE-BETA-ALANINE-LIG-MONOMER"/>
<dbReference type="BioCyc" id="MetaCyc:PANTOATE-BETA-ALANINE-LIG-MONOMER"/>
<dbReference type="BRENDA" id="6.3.2.1">
    <property type="organism ID" value="2026"/>
</dbReference>
<dbReference type="SABIO-RK" id="P31663"/>
<dbReference type="UniPathway" id="UPA00028">
    <property type="reaction ID" value="UER00005"/>
</dbReference>
<dbReference type="EvolutionaryTrace" id="P31663"/>
<dbReference type="PRO" id="PR:P31663"/>
<dbReference type="Proteomes" id="UP000000625">
    <property type="component" value="Chromosome"/>
</dbReference>
<dbReference type="GO" id="GO:0005829">
    <property type="term" value="C:cytosol"/>
    <property type="evidence" value="ECO:0000314"/>
    <property type="project" value="EcoCyc"/>
</dbReference>
<dbReference type="GO" id="GO:0005524">
    <property type="term" value="F:ATP binding"/>
    <property type="evidence" value="ECO:0007669"/>
    <property type="project" value="UniProtKB-KW"/>
</dbReference>
<dbReference type="GO" id="GO:0042802">
    <property type="term" value="F:identical protein binding"/>
    <property type="evidence" value="ECO:0000353"/>
    <property type="project" value="IntAct"/>
</dbReference>
<dbReference type="GO" id="GO:0004592">
    <property type="term" value="F:pantoate-beta-alanine ligase activity"/>
    <property type="evidence" value="ECO:0000314"/>
    <property type="project" value="EcoCyc"/>
</dbReference>
<dbReference type="GO" id="GO:0042803">
    <property type="term" value="F:protein homodimerization activity"/>
    <property type="evidence" value="ECO:0000314"/>
    <property type="project" value="EcoCyc"/>
</dbReference>
<dbReference type="GO" id="GO:0015940">
    <property type="term" value="P:pantothenate biosynthetic process"/>
    <property type="evidence" value="ECO:0000315"/>
    <property type="project" value="EcoCyc"/>
</dbReference>
<dbReference type="CDD" id="cd00560">
    <property type="entry name" value="PanC"/>
    <property type="match status" value="1"/>
</dbReference>
<dbReference type="FunFam" id="3.30.1300.10:FF:000001">
    <property type="entry name" value="Pantothenate synthetase"/>
    <property type="match status" value="1"/>
</dbReference>
<dbReference type="FunFam" id="3.40.50.620:FF:000013">
    <property type="entry name" value="Pantothenate synthetase"/>
    <property type="match status" value="1"/>
</dbReference>
<dbReference type="Gene3D" id="3.40.50.620">
    <property type="entry name" value="HUPs"/>
    <property type="match status" value="1"/>
</dbReference>
<dbReference type="Gene3D" id="3.30.1300.10">
    <property type="entry name" value="Pantoate-beta-alanine ligase, C-terminal domain"/>
    <property type="match status" value="1"/>
</dbReference>
<dbReference type="HAMAP" id="MF_00158">
    <property type="entry name" value="PanC"/>
    <property type="match status" value="1"/>
</dbReference>
<dbReference type="InterPro" id="IPR004821">
    <property type="entry name" value="Cyt_trans-like"/>
</dbReference>
<dbReference type="InterPro" id="IPR003721">
    <property type="entry name" value="Pantoate_ligase"/>
</dbReference>
<dbReference type="InterPro" id="IPR042176">
    <property type="entry name" value="Pantoate_ligase_C"/>
</dbReference>
<dbReference type="InterPro" id="IPR014729">
    <property type="entry name" value="Rossmann-like_a/b/a_fold"/>
</dbReference>
<dbReference type="NCBIfam" id="TIGR00125">
    <property type="entry name" value="cyt_tran_rel"/>
    <property type="match status" value="1"/>
</dbReference>
<dbReference type="NCBIfam" id="TIGR00018">
    <property type="entry name" value="panC"/>
    <property type="match status" value="1"/>
</dbReference>
<dbReference type="PANTHER" id="PTHR21299">
    <property type="entry name" value="CYTIDYLATE KINASE/PANTOATE-BETA-ALANINE LIGASE"/>
    <property type="match status" value="1"/>
</dbReference>
<dbReference type="PANTHER" id="PTHR21299:SF1">
    <property type="entry name" value="PANTOATE--BETA-ALANINE LIGASE"/>
    <property type="match status" value="1"/>
</dbReference>
<dbReference type="Pfam" id="PF02569">
    <property type="entry name" value="Pantoate_ligase"/>
    <property type="match status" value="1"/>
</dbReference>
<dbReference type="SUPFAM" id="SSF52374">
    <property type="entry name" value="Nucleotidylyl transferase"/>
    <property type="match status" value="1"/>
</dbReference>
<sequence>MLIIETLPLLRQQIRRLRMEGKRVALVPTMGNLHDGHMKLVDEAKARADVVVVSIFVNPMQFDRPEDLARYPRTLQEDCEKLNKRKVDLVFAPSVKEIYPNGTETHTYVDVPGLSTMLEGASRPGHFRGVSTIVSKLFNLVQPDIACFGEKDFQQLALIRKMVADMGFDIEIVGVPIMRAKDGLALSSRNGYLTAEQRKIAPGLYKVLSSIADKLQAGERDLDEIITIAGQELNEKGFRADDIQIRDADTLLEVSETSKRAVILVAAWLGDARLIDNKMVELA</sequence>
<reference key="1">
    <citation type="journal article" date="1996" name="FEMS Microbiol. Lett.">
        <title>Characterization and sequence of the Escherichia coli panBCD gene cluster.</title>
        <authorList>
            <person name="Merkel W.K."/>
            <person name="Nichols B.P."/>
        </authorList>
    </citation>
    <scope>NUCLEOTIDE SEQUENCE [GENOMIC DNA]</scope>
    <source>
        <strain>K12 / W3110 / ATCC 27325 / DSM 5911</strain>
    </source>
</reference>
<reference key="2">
    <citation type="journal article" date="1997" name="Science">
        <title>The complete genome sequence of Escherichia coli K-12.</title>
        <authorList>
            <person name="Blattner F.R."/>
            <person name="Plunkett G. III"/>
            <person name="Bloch C.A."/>
            <person name="Perna N.T."/>
            <person name="Burland V."/>
            <person name="Riley M."/>
            <person name="Collado-Vides J."/>
            <person name="Glasner J.D."/>
            <person name="Rode C.K."/>
            <person name="Mayhew G.F."/>
            <person name="Gregor J."/>
            <person name="Davis N.W."/>
            <person name="Kirkpatrick H.A."/>
            <person name="Goeden M.A."/>
            <person name="Rose D.J."/>
            <person name="Mau B."/>
            <person name="Shao Y."/>
        </authorList>
    </citation>
    <scope>NUCLEOTIDE SEQUENCE [LARGE SCALE GENOMIC DNA]</scope>
    <source>
        <strain>K12 / MG1655 / ATCC 47076</strain>
    </source>
</reference>
<reference key="3">
    <citation type="journal article" date="2006" name="Mol. Syst. Biol.">
        <title>Highly accurate genome sequences of Escherichia coli K-12 strains MG1655 and W3110.</title>
        <authorList>
            <person name="Hayashi K."/>
            <person name="Morooka N."/>
            <person name="Yamamoto Y."/>
            <person name="Fujita K."/>
            <person name="Isono K."/>
            <person name="Choi S."/>
            <person name="Ohtsubo E."/>
            <person name="Baba T."/>
            <person name="Wanner B.L."/>
            <person name="Mori H."/>
            <person name="Horiuchi T."/>
        </authorList>
    </citation>
    <scope>NUCLEOTIDE SEQUENCE [LARGE SCALE GENOMIC DNA]</scope>
    <source>
        <strain>K12 / W3110 / ATCC 27325 / DSM 5911</strain>
    </source>
</reference>
<reference key="4">
    <citation type="journal article" date="1978" name="J. Nutr. Sci. Vitaminol.">
        <title>Enzymological properties of pantothenate synthetase from Escherichia coli B.</title>
        <authorList>
            <person name="Miyatake K."/>
            <person name="Nakano Y."/>
            <person name="Kitaoka S."/>
        </authorList>
    </citation>
    <scope>FUNCTION</scope>
    <scope>BIOPHYSICOCHEMICAL PROPERTIES</scope>
    <scope>REACTION MECHANISM</scope>
    <scope>ACTIVITY REGULATION</scope>
    <source>
        <strain>B</strain>
    </source>
</reference>
<reference key="5">
    <citation type="journal article" date="2001" name="Structure">
        <title>The crystal structure of E. coli pantothenate synthetase confirms it as a member of the cytidylyltransferase superfamily.</title>
        <authorList>
            <person name="von Delft F."/>
            <person name="Lewendon A."/>
            <person name="Dhanaraj V."/>
            <person name="Blundell T.L."/>
            <person name="Abell C."/>
            <person name="Smith A.G."/>
        </authorList>
    </citation>
    <scope>X-RAY CRYSTALLOGRAPHY (1.7 ANGSTROMS)</scope>
    <scope>MASS SPECTROMETRY</scope>
    <scope>SUBUNIT</scope>
</reference>
<proteinExistence type="evidence at protein level"/>
<accession>P31663</accession>
<accession>Q2MCG4</accession>
<keyword id="KW-0002">3D-structure</keyword>
<keyword id="KW-0067">ATP-binding</keyword>
<keyword id="KW-0963">Cytoplasm</keyword>
<keyword id="KW-0436">Ligase</keyword>
<keyword id="KW-0547">Nucleotide-binding</keyword>
<keyword id="KW-0566">Pantothenate biosynthesis</keyword>
<keyword id="KW-1185">Reference proteome</keyword>
<comment type="function">
    <text evidence="3">Catalyzes the condensation of pantoate with beta-alanine in an ATP-dependent reaction via a pantoyl-adenylate intermediate.</text>
</comment>
<comment type="catalytic activity">
    <reaction>
        <text>(R)-pantoate + beta-alanine + ATP = (R)-pantothenate + AMP + diphosphate + H(+)</text>
        <dbReference type="Rhea" id="RHEA:10912"/>
        <dbReference type="ChEBI" id="CHEBI:15378"/>
        <dbReference type="ChEBI" id="CHEBI:15980"/>
        <dbReference type="ChEBI" id="CHEBI:29032"/>
        <dbReference type="ChEBI" id="CHEBI:30616"/>
        <dbReference type="ChEBI" id="CHEBI:33019"/>
        <dbReference type="ChEBI" id="CHEBI:57966"/>
        <dbReference type="ChEBI" id="CHEBI:456215"/>
        <dbReference type="EC" id="6.3.2.1"/>
    </reaction>
</comment>
<comment type="activity regulation">
    <text evidence="3">Activation requires a combination of a divalent cation, magnesium or manganese, and a monovalent cation, potassium or ammonium. Above the optimum concentration for activation, magnesium and manganese are rather inhibitory. Also activated by 2-mercaptoethanol, dithiothreitol, cysteine and glutathione. Inhibited by divalent cations (mercury, cobalt, zinc, copper, silver), chelating agents (EDTA, EGTA and o-phenanthroline), and analogs of beta-alanine (taurine, gamma-aminobutyrate, gamma-amino-beta-hydroxybutyrate).</text>
</comment>
<comment type="biophysicochemical properties">
    <kinetics>
        <KM evidence="3">63 uM for pantoate</KM>
        <KM evidence="3">100 uM for ATP</KM>
        <KM evidence="3">150 uM for beta-alanine</KM>
        <KM evidence="3">2000 uM for magnesium</KM>
        <KM evidence="3">5500 uM for manganese</KM>
    </kinetics>
    <phDependence>
        <text evidence="3">Optimum pH is 10. Stable from pH 5.0 to 11.0.</text>
    </phDependence>
    <temperatureDependence>
        <text evidence="3">Optimum temperature is 30 degrees Celsius. Stable up to 37 degrees Celsius and loses activity almost completely when incubated at 60 degrees Celsius for 10 minutes.</text>
    </temperatureDependence>
</comment>
<comment type="pathway">
    <text>Cofactor biosynthesis; (R)-pantothenate biosynthesis; (R)-pantothenate from (R)-pantoate and beta-alanine: step 1/1.</text>
</comment>
<comment type="subunit">
    <text evidence="2">Homodimer.</text>
</comment>
<comment type="interaction">
    <interactant intactId="EBI-545354">
        <id>P31663</id>
    </interactant>
    <interactant intactId="EBI-545354">
        <id>P31663</id>
        <label>panC</label>
    </interactant>
    <organismsDiffer>false</organismsDiffer>
    <experiments>5</experiments>
</comment>
<comment type="interaction">
    <interactant intactId="EBI-545354">
        <id>P31663</id>
    </interactant>
    <interactant intactId="EBI-545346">
        <id>P65556</id>
        <label>yfcD</label>
    </interactant>
    <organismsDiffer>false</organismsDiffer>
    <experiments>6</experiments>
</comment>
<comment type="subcellular location">
    <subcellularLocation>
        <location evidence="4">Cytoplasm</location>
    </subcellularLocation>
</comment>
<comment type="mass spectrometry"/>
<comment type="miscellaneous">
    <text>The reaction proceeds by a bi uni uni bi ping pong mechanism.</text>
</comment>
<comment type="similarity">
    <text evidence="4">Belongs to the pantothenate synthetase family.</text>
</comment>
<feature type="chain" id="PRO_0000128229" description="Pantothenate synthetase">
    <location>
        <begin position="1"/>
        <end position="283"/>
    </location>
</feature>
<feature type="active site" description="Proton donor" evidence="1">
    <location>
        <position position="37"/>
    </location>
</feature>
<feature type="binding site" evidence="1">
    <location>
        <begin position="30"/>
        <end position="37"/>
    </location>
    <ligand>
        <name>ATP</name>
        <dbReference type="ChEBI" id="CHEBI:30616"/>
    </ligand>
</feature>
<feature type="binding site" evidence="1">
    <location>
        <position position="61"/>
    </location>
    <ligand>
        <name>(R)-pantoate</name>
        <dbReference type="ChEBI" id="CHEBI:15980"/>
    </ligand>
</feature>
<feature type="binding site" evidence="1">
    <location>
        <position position="61"/>
    </location>
    <ligand>
        <name>beta-alanine</name>
        <dbReference type="ChEBI" id="CHEBI:57966"/>
    </ligand>
</feature>
<feature type="binding site" evidence="1">
    <location>
        <begin position="149"/>
        <end position="152"/>
    </location>
    <ligand>
        <name>ATP</name>
        <dbReference type="ChEBI" id="CHEBI:30616"/>
    </ligand>
</feature>
<feature type="binding site" evidence="1">
    <location>
        <position position="155"/>
    </location>
    <ligand>
        <name>(R)-pantoate</name>
        <dbReference type="ChEBI" id="CHEBI:15980"/>
    </ligand>
</feature>
<feature type="binding site" evidence="1">
    <location>
        <position position="178"/>
    </location>
    <ligand>
        <name>ATP</name>
        <dbReference type="ChEBI" id="CHEBI:30616"/>
    </ligand>
</feature>
<feature type="binding site" evidence="1">
    <location>
        <begin position="186"/>
        <end position="189"/>
    </location>
    <ligand>
        <name>ATP</name>
        <dbReference type="ChEBI" id="CHEBI:30616"/>
    </ligand>
</feature>
<feature type="strand" evidence="6">
    <location>
        <begin position="2"/>
        <end position="4"/>
    </location>
</feature>
<feature type="helix" evidence="6">
    <location>
        <begin position="7"/>
        <end position="19"/>
    </location>
</feature>
<feature type="strand" evidence="6">
    <location>
        <begin position="24"/>
        <end position="29"/>
    </location>
</feature>
<feature type="helix" evidence="6">
    <location>
        <begin position="35"/>
        <end position="37"/>
    </location>
</feature>
<feature type="helix" evidence="6">
    <location>
        <begin position="38"/>
        <end position="46"/>
    </location>
</feature>
<feature type="strand" evidence="6">
    <location>
        <begin position="49"/>
        <end position="55"/>
    </location>
</feature>
<feature type="helix" evidence="6">
    <location>
        <begin position="59"/>
        <end position="61"/>
    </location>
</feature>
<feature type="helix" evidence="6">
    <location>
        <begin position="65"/>
        <end position="70"/>
    </location>
</feature>
<feature type="helix" evidence="6">
    <location>
        <begin position="75"/>
        <end position="84"/>
    </location>
</feature>
<feature type="strand" evidence="6">
    <location>
        <begin position="89"/>
        <end position="91"/>
    </location>
</feature>
<feature type="helix" evidence="6">
    <location>
        <begin position="95"/>
        <end position="98"/>
    </location>
</feature>
<feature type="strand" evidence="6">
    <location>
        <begin position="108"/>
        <end position="110"/>
    </location>
</feature>
<feature type="helix" evidence="5">
    <location>
        <begin position="114"/>
        <end position="116"/>
    </location>
</feature>
<feature type="helix" evidence="5">
    <location>
        <begin position="119"/>
        <end position="122"/>
    </location>
</feature>
<feature type="helix" evidence="6">
    <location>
        <begin position="126"/>
        <end position="141"/>
    </location>
</feature>
<feature type="strand" evidence="6">
    <location>
        <begin position="144"/>
        <end position="152"/>
    </location>
</feature>
<feature type="helix" evidence="6">
    <location>
        <begin position="153"/>
        <end position="166"/>
    </location>
</feature>
<feature type="strand" evidence="6">
    <location>
        <begin position="171"/>
        <end position="175"/>
    </location>
</feature>
<feature type="helix" evidence="5">
    <location>
        <begin position="188"/>
        <end position="192"/>
    </location>
</feature>
<feature type="helix" evidence="5">
    <location>
        <begin position="195"/>
        <end position="200"/>
    </location>
</feature>
<feature type="helix" evidence="5">
    <location>
        <begin position="203"/>
        <end position="216"/>
    </location>
</feature>
<feature type="helix" evidence="5">
    <location>
        <begin position="222"/>
        <end position="236"/>
    </location>
</feature>
<feature type="strand" evidence="5">
    <location>
        <begin position="239"/>
        <end position="247"/>
    </location>
</feature>
<feature type="turn" evidence="5">
    <location>
        <begin position="248"/>
        <end position="250"/>
    </location>
</feature>
<feature type="strand" evidence="5">
    <location>
        <begin position="260"/>
        <end position="269"/>
    </location>
</feature>
<feature type="strand" evidence="5">
    <location>
        <begin position="272"/>
        <end position="281"/>
    </location>
</feature>
<gene>
    <name type="primary">panC</name>
    <name type="ordered locus">b0133</name>
    <name type="ordered locus">JW0129</name>
</gene>
<organism>
    <name type="scientific">Escherichia coli (strain K12)</name>
    <dbReference type="NCBI Taxonomy" id="83333"/>
    <lineage>
        <taxon>Bacteria</taxon>
        <taxon>Pseudomonadati</taxon>
        <taxon>Pseudomonadota</taxon>
        <taxon>Gammaproteobacteria</taxon>
        <taxon>Enterobacterales</taxon>
        <taxon>Enterobacteriaceae</taxon>
        <taxon>Escherichia</taxon>
    </lineage>
</organism>
<evidence type="ECO:0000250" key="1"/>
<evidence type="ECO:0000269" key="2">
    <source>
    </source>
</evidence>
<evidence type="ECO:0000269" key="3">
    <source>
    </source>
</evidence>
<evidence type="ECO:0000305" key="4"/>
<evidence type="ECO:0007829" key="5">
    <source>
        <dbReference type="PDB" id="1IHO"/>
    </source>
</evidence>
<evidence type="ECO:0007829" key="6">
    <source>
        <dbReference type="PDB" id="3GUZ"/>
    </source>
</evidence>